<protein>
    <recommendedName>
        <fullName evidence="1">Urease accessory protein UreG</fullName>
    </recommendedName>
</protein>
<keyword id="KW-0143">Chaperone</keyword>
<keyword id="KW-0963">Cytoplasm</keyword>
<keyword id="KW-0342">GTP-binding</keyword>
<keyword id="KW-0996">Nickel insertion</keyword>
<keyword id="KW-0547">Nucleotide-binding</keyword>
<keyword id="KW-1185">Reference proteome</keyword>
<proteinExistence type="inferred from homology"/>
<reference key="1">
    <citation type="journal article" date="2007" name="PLoS Genet.">
        <title>Patterns and implications of gene gain and loss in the evolution of Prochlorococcus.</title>
        <authorList>
            <person name="Kettler G.C."/>
            <person name="Martiny A.C."/>
            <person name="Huang K."/>
            <person name="Zucker J."/>
            <person name="Coleman M.L."/>
            <person name="Rodrigue S."/>
            <person name="Chen F."/>
            <person name="Lapidus A."/>
            <person name="Ferriera S."/>
            <person name="Johnson J."/>
            <person name="Steglich C."/>
            <person name="Church G.M."/>
            <person name="Richardson P."/>
            <person name="Chisholm S.W."/>
        </authorList>
    </citation>
    <scope>NUCLEOTIDE SEQUENCE [LARGE SCALE GENOMIC DNA]</scope>
    <source>
        <strain>NATL2A</strain>
    </source>
</reference>
<sequence>MESKLRVGIAGPVGSGKTAIIQRLCENLKDRLEIAVVTNDIYTQEDAKFLTNSKALAPERIKGVETGGCPHTAIREDCSINRIAVEELEHKFTTLDLVFVESGGDNLAASFSPELVDVCIYIIDVAAGDKIPRKGGPGITRSDLLVINKIDLAEMVGASLKIMERDTLLMRKNLPWCFTNTKTGEGIKIIEGFLCNQIPSVHKMV</sequence>
<dbReference type="EMBL" id="CP000095">
    <property type="protein sequence ID" value="AAZ58539.1"/>
    <property type="molecule type" value="Genomic_DNA"/>
</dbReference>
<dbReference type="RefSeq" id="WP_011295394.1">
    <property type="nucleotide sequence ID" value="NC_007335.2"/>
</dbReference>
<dbReference type="SMR" id="Q46IY9"/>
<dbReference type="STRING" id="59920.PMN2A_1049"/>
<dbReference type="KEGG" id="pmn:PMN2A_1049"/>
<dbReference type="HOGENOM" id="CLU_072144_1_0_3"/>
<dbReference type="OrthoDB" id="9802035at2"/>
<dbReference type="PhylomeDB" id="Q46IY9"/>
<dbReference type="Proteomes" id="UP000002535">
    <property type="component" value="Chromosome"/>
</dbReference>
<dbReference type="GO" id="GO:0005737">
    <property type="term" value="C:cytoplasm"/>
    <property type="evidence" value="ECO:0007669"/>
    <property type="project" value="UniProtKB-SubCell"/>
</dbReference>
<dbReference type="GO" id="GO:0005525">
    <property type="term" value="F:GTP binding"/>
    <property type="evidence" value="ECO:0007669"/>
    <property type="project" value="UniProtKB-KW"/>
</dbReference>
<dbReference type="GO" id="GO:0003924">
    <property type="term" value="F:GTPase activity"/>
    <property type="evidence" value="ECO:0007669"/>
    <property type="project" value="InterPro"/>
</dbReference>
<dbReference type="GO" id="GO:0016151">
    <property type="term" value="F:nickel cation binding"/>
    <property type="evidence" value="ECO:0007669"/>
    <property type="project" value="UniProtKB-UniRule"/>
</dbReference>
<dbReference type="GO" id="GO:0043419">
    <property type="term" value="P:urea catabolic process"/>
    <property type="evidence" value="ECO:0007669"/>
    <property type="project" value="InterPro"/>
</dbReference>
<dbReference type="CDD" id="cd05540">
    <property type="entry name" value="UreG"/>
    <property type="match status" value="1"/>
</dbReference>
<dbReference type="Gene3D" id="3.40.50.300">
    <property type="entry name" value="P-loop containing nucleotide triphosphate hydrolases"/>
    <property type="match status" value="1"/>
</dbReference>
<dbReference type="HAMAP" id="MF_01389">
    <property type="entry name" value="UreG"/>
    <property type="match status" value="1"/>
</dbReference>
<dbReference type="InterPro" id="IPR003495">
    <property type="entry name" value="CobW/HypB/UreG_nucleotide-bd"/>
</dbReference>
<dbReference type="InterPro" id="IPR027417">
    <property type="entry name" value="P-loop_NTPase"/>
</dbReference>
<dbReference type="InterPro" id="IPR004400">
    <property type="entry name" value="UreG"/>
</dbReference>
<dbReference type="NCBIfam" id="TIGR00101">
    <property type="entry name" value="ureG"/>
    <property type="match status" value="1"/>
</dbReference>
<dbReference type="PANTHER" id="PTHR31715">
    <property type="entry name" value="UREASE ACCESSORY PROTEIN G"/>
    <property type="match status" value="1"/>
</dbReference>
<dbReference type="PANTHER" id="PTHR31715:SF0">
    <property type="entry name" value="UREASE ACCESSORY PROTEIN G"/>
    <property type="match status" value="1"/>
</dbReference>
<dbReference type="Pfam" id="PF02492">
    <property type="entry name" value="cobW"/>
    <property type="match status" value="1"/>
</dbReference>
<dbReference type="PIRSF" id="PIRSF005624">
    <property type="entry name" value="Ni-bind_GTPase"/>
    <property type="match status" value="1"/>
</dbReference>
<dbReference type="SUPFAM" id="SSF52540">
    <property type="entry name" value="P-loop containing nucleoside triphosphate hydrolases"/>
    <property type="match status" value="1"/>
</dbReference>
<comment type="function">
    <text evidence="1">Facilitates the functional incorporation of the urease nickel metallocenter. This process requires GTP hydrolysis, probably effectuated by UreG.</text>
</comment>
<comment type="subunit">
    <text evidence="1">Homodimer. UreD, UreF and UreG form a complex that acts as a GTP-hydrolysis-dependent molecular chaperone, activating the urease apoprotein by helping to assemble the nickel containing metallocenter of UreC. The UreE protein probably delivers the nickel.</text>
</comment>
<comment type="subcellular location">
    <subcellularLocation>
        <location evidence="1">Cytoplasm</location>
    </subcellularLocation>
</comment>
<comment type="similarity">
    <text evidence="1">Belongs to the SIMIBI class G3E GTPase family. UreG subfamily.</text>
</comment>
<feature type="chain" id="PRO_0000347420" description="Urease accessory protein UreG">
    <location>
        <begin position="1"/>
        <end position="205"/>
    </location>
</feature>
<feature type="binding site" evidence="1">
    <location>
        <begin position="11"/>
        <end position="18"/>
    </location>
    <ligand>
        <name>GTP</name>
        <dbReference type="ChEBI" id="CHEBI:37565"/>
    </ligand>
</feature>
<name>UREG_PROMT</name>
<evidence type="ECO:0000255" key="1">
    <source>
        <dbReference type="HAMAP-Rule" id="MF_01389"/>
    </source>
</evidence>
<gene>
    <name evidence="1" type="primary">ureG</name>
    <name type="ordered locus">PMN2A_1049</name>
</gene>
<accession>Q46IY9</accession>
<organism>
    <name type="scientific">Prochlorococcus marinus (strain NATL2A)</name>
    <dbReference type="NCBI Taxonomy" id="59920"/>
    <lineage>
        <taxon>Bacteria</taxon>
        <taxon>Bacillati</taxon>
        <taxon>Cyanobacteriota</taxon>
        <taxon>Cyanophyceae</taxon>
        <taxon>Synechococcales</taxon>
        <taxon>Prochlorococcaceae</taxon>
        <taxon>Prochlorococcus</taxon>
    </lineage>
</organism>